<evidence type="ECO:0000255" key="1"/>
<evidence type="ECO:0000256" key="2">
    <source>
        <dbReference type="SAM" id="MobiDB-lite"/>
    </source>
</evidence>
<evidence type="ECO:0000269" key="3">
    <source>
    </source>
</evidence>
<keyword id="KW-0150">Chloroplast</keyword>
<keyword id="KW-0507">mRNA processing</keyword>
<keyword id="KW-0934">Plastid</keyword>
<keyword id="KW-0677">Repeat</keyword>
<keyword id="KW-0802">TPR repeat</keyword>
<keyword id="KW-0809">Transit peptide</keyword>
<reference key="1">
    <citation type="journal article" date="2000" name="EMBO J.">
        <title>The Nac2 gene of Chlamydomonas encodes a chloroplast TPR-like protein involved in psbD mRNA stability.</title>
        <authorList>
            <person name="Boudreau E."/>
            <person name="Nickelsen J."/>
            <person name="Lemaire S.D."/>
            <person name="Ossenbuehl F."/>
            <person name="Rochaix J.-D."/>
        </authorList>
    </citation>
    <scope>NUCLEOTIDE SEQUENCE [MRNA]</scope>
    <scope>MUTAGENESIS OF ALA-1038</scope>
    <source>
        <strain>137c / CC-125</strain>
    </source>
</reference>
<proteinExistence type="evidence at protein level"/>
<gene>
    <name type="primary">NAC2</name>
</gene>
<dbReference type="EMBL" id="AJ271460">
    <property type="protein sequence ID" value="CAB96529.1"/>
    <property type="molecule type" value="mRNA"/>
</dbReference>
<dbReference type="SMR" id="Q9LEM8"/>
<dbReference type="PaxDb" id="3055-EDP08046"/>
<dbReference type="GO" id="GO:0009570">
    <property type="term" value="C:chloroplast stroma"/>
    <property type="evidence" value="ECO:0007669"/>
    <property type="project" value="UniProtKB-SubCell"/>
</dbReference>
<dbReference type="GO" id="GO:0003729">
    <property type="term" value="F:mRNA binding"/>
    <property type="evidence" value="ECO:0007669"/>
    <property type="project" value="InterPro"/>
</dbReference>
<dbReference type="GO" id="GO:0006397">
    <property type="term" value="P:mRNA processing"/>
    <property type="evidence" value="ECO:0007669"/>
    <property type="project" value="UniProtKB-KW"/>
</dbReference>
<dbReference type="Gene3D" id="1.25.40.10">
    <property type="entry name" value="Tetratricopeptide repeat domain"/>
    <property type="match status" value="2"/>
</dbReference>
<dbReference type="InterPro" id="IPR003107">
    <property type="entry name" value="HAT"/>
</dbReference>
<dbReference type="InterPro" id="IPR044624">
    <property type="entry name" value="Mbb1-like"/>
</dbReference>
<dbReference type="InterPro" id="IPR011990">
    <property type="entry name" value="TPR-like_helical_dom_sf"/>
</dbReference>
<dbReference type="InterPro" id="IPR019734">
    <property type="entry name" value="TPR_rpt"/>
</dbReference>
<dbReference type="PANTHER" id="PTHR44917">
    <property type="entry name" value="PROTEIN HIGH CHLOROPHYLL FLUORESCENT 107"/>
    <property type="match status" value="1"/>
</dbReference>
<dbReference type="PANTHER" id="PTHR44917:SF1">
    <property type="entry name" value="PROTEIN HIGH CHLOROPHYLL FLUORESCENT 107"/>
    <property type="match status" value="1"/>
</dbReference>
<dbReference type="Pfam" id="PF13432">
    <property type="entry name" value="TPR_16"/>
    <property type="match status" value="2"/>
</dbReference>
<dbReference type="SMART" id="SM00386">
    <property type="entry name" value="HAT"/>
    <property type="match status" value="5"/>
</dbReference>
<dbReference type="SUPFAM" id="SSF48452">
    <property type="entry name" value="TPR-like"/>
    <property type="match status" value="2"/>
</dbReference>
<dbReference type="PROSITE" id="PS50005">
    <property type="entry name" value="TPR"/>
    <property type="match status" value="2"/>
</dbReference>
<dbReference type="PROSITE" id="PS50293">
    <property type="entry name" value="TPR_REGION"/>
    <property type="match status" value="1"/>
</dbReference>
<feature type="transit peptide" description="Chloroplast" evidence="1">
    <location>
        <begin position="1"/>
        <end position="45"/>
    </location>
</feature>
<feature type="chain" id="PRO_0000035684" description="PsbD mRNA maturation factor Nac2, chloroplastic">
    <location>
        <begin position="46"/>
        <end position="1385"/>
    </location>
</feature>
<feature type="repeat" description="TPR 1">
    <location>
        <begin position="851"/>
        <end position="884"/>
    </location>
</feature>
<feature type="repeat" description="TPR 2">
    <location>
        <begin position="951"/>
        <end position="984"/>
    </location>
</feature>
<feature type="repeat" description="TPR 3">
    <location>
        <begin position="985"/>
        <end position="1018"/>
    </location>
</feature>
<feature type="repeat" description="TPR 4">
    <location>
        <begin position="1019"/>
        <end position="1052"/>
    </location>
</feature>
<feature type="repeat" description="TPR 5">
    <location>
        <begin position="1053"/>
        <end position="1086"/>
    </location>
</feature>
<feature type="repeat" description="TPR 6">
    <location>
        <begin position="1091"/>
        <end position="1124"/>
    </location>
</feature>
<feature type="repeat" description="TPR 7">
    <location>
        <begin position="1125"/>
        <end position="1158"/>
    </location>
</feature>
<feature type="repeat" description="TPR 8">
    <location>
        <begin position="1160"/>
        <end position="1193"/>
    </location>
</feature>
<feature type="repeat" description="TPR 9">
    <location>
        <begin position="1205"/>
        <end position="1238"/>
    </location>
</feature>
<feature type="region of interest" description="Disordered" evidence="2">
    <location>
        <begin position="132"/>
        <end position="157"/>
    </location>
</feature>
<feature type="region of interest" description="Disordered" evidence="2">
    <location>
        <begin position="263"/>
        <end position="282"/>
    </location>
</feature>
<feature type="region of interest" description="Disordered" evidence="2">
    <location>
        <begin position="304"/>
        <end position="360"/>
    </location>
</feature>
<feature type="region of interest" description="Disordered" evidence="2">
    <location>
        <begin position="387"/>
        <end position="502"/>
    </location>
</feature>
<feature type="region of interest" description="Disordered" evidence="2">
    <location>
        <begin position="546"/>
        <end position="568"/>
    </location>
</feature>
<feature type="region of interest" description="Disordered" evidence="2">
    <location>
        <begin position="726"/>
        <end position="756"/>
    </location>
</feature>
<feature type="region of interest" description="Disordered" evidence="2">
    <location>
        <begin position="840"/>
        <end position="899"/>
    </location>
</feature>
<feature type="region of interest" description="Disordered" evidence="2">
    <location>
        <begin position="1237"/>
        <end position="1257"/>
    </location>
</feature>
<feature type="region of interest" description="Disordered" evidence="2">
    <location>
        <begin position="1333"/>
        <end position="1385"/>
    </location>
</feature>
<feature type="compositionally biased region" description="Low complexity" evidence="2">
    <location>
        <begin position="132"/>
        <end position="152"/>
    </location>
</feature>
<feature type="compositionally biased region" description="Basic and acidic residues" evidence="2">
    <location>
        <begin position="271"/>
        <end position="281"/>
    </location>
</feature>
<feature type="compositionally biased region" description="Low complexity" evidence="2">
    <location>
        <begin position="304"/>
        <end position="313"/>
    </location>
</feature>
<feature type="compositionally biased region" description="Gly residues" evidence="2">
    <location>
        <begin position="403"/>
        <end position="412"/>
    </location>
</feature>
<feature type="compositionally biased region" description="Low complexity" evidence="2">
    <location>
        <begin position="448"/>
        <end position="464"/>
    </location>
</feature>
<feature type="compositionally biased region" description="Low complexity" evidence="2">
    <location>
        <begin position="554"/>
        <end position="568"/>
    </location>
</feature>
<feature type="compositionally biased region" description="Low complexity" evidence="2">
    <location>
        <begin position="729"/>
        <end position="744"/>
    </location>
</feature>
<feature type="compositionally biased region" description="Low complexity" evidence="2">
    <location>
        <begin position="854"/>
        <end position="893"/>
    </location>
</feature>
<feature type="compositionally biased region" description="Acidic residues" evidence="2">
    <location>
        <begin position="1356"/>
        <end position="1365"/>
    </location>
</feature>
<feature type="compositionally biased region" description="Basic and acidic residues" evidence="2">
    <location>
        <begin position="1374"/>
        <end position="1385"/>
    </location>
</feature>
<feature type="mutagenesis site" description="Loss of mutant complementation; protein accumulation decreases and the protein forms high molecular weight aggregates." evidence="3">
    <original>A</original>
    <variation>E</variation>
    <location>
        <position position="1038"/>
    </location>
</feature>
<comment type="function">
    <text>Involved, directly or indirectly, in the processing of the chloroplast encoded psbD mRNA to its mature form, acting via the 5'-UTR of the psbD mRNA. The last 588 amino acids of the protein are sufficient to confer stability on the transcript in vivo.</text>
</comment>
<comment type="subunit">
    <text>Part of 2 complexes of about 600 and less than 2000 kDa, both of which also contain non-polysomal RNA.</text>
</comment>
<comment type="subcellular location">
    <subcellularLocation>
        <location>Plastid</location>
        <location>Chloroplast stroma</location>
    </subcellularLocation>
</comment>
<accession>Q9LEM8</accession>
<organism>
    <name type="scientific">Chlamydomonas reinhardtii</name>
    <name type="common">Chlamydomonas smithii</name>
    <dbReference type="NCBI Taxonomy" id="3055"/>
    <lineage>
        <taxon>Eukaryota</taxon>
        <taxon>Viridiplantae</taxon>
        <taxon>Chlorophyta</taxon>
        <taxon>core chlorophytes</taxon>
        <taxon>Chlorophyceae</taxon>
        <taxon>CS clade</taxon>
        <taxon>Chlamydomonadales</taxon>
        <taxon>Chlamydomonadaceae</taxon>
        <taxon>Chlamydomonas</taxon>
    </lineage>
</organism>
<protein>
    <recommendedName>
        <fullName>PsbD mRNA maturation factor Nac2, chloroplastic</fullName>
    </recommendedName>
</protein>
<name>NAC2_CHLRE</name>
<sequence length="1385" mass="144060">MGALPCPAHIEHHQGLSSFGTRRVLRQSVACGAHRSRRRSLWAGASPGAPKYDEGALSCSFQLGSASLHVSEVRGSRHATPRAPPTGGCIELPKTLALTEEQDQRAARATSQLLNAISRCAAGSPLARLLTGPHGAASATGAGSHSSSAGAPTPTPRPDIAAAAALLPSLTWRWVSVADLEGGWVDRGVAHLLREALLVQKAASDVNASVSELVGWCMDNCSAPAAALAALWGQQQGAALPARSRSFYGLLLQRLDGGGASSAVAAAAGRQPHEHQQERSSAEAYGLSPALVFCSSVARTALSTSSRRGGRSSSSEEDGDAHDDRSHPHTQQLLEQDGSEPLVGAAASPSSNGKRSAAGPSAGADVILVGELPGDVLLDESVGNVRRQQPHANGSGAKHNGVNGSGKSGSGGAKVAHAHVNGSAADTDPGQAALGVKGSAESPLEQPAPAAKRSAAGKASRPAALLLKRPSRSAAPPAPTLPDGAEADGFASDGSGLPGHGQQQLSAIAAAAAASSLLAGPAAPMSFLETLSDDDDEARRAASLLNGAGMSDPASASSTSTSSNSGTSNLVGRVFVPMRLVSVSRFPLRDALGRPLPDGLAVPPTGPIVLSNDARVFPGTEGLLSDYATPAGDKLAVRLEYITDRSYAYGDVALQLFNISRVTRKRTDNCQMLVNGKPVNVGDPGVPLVPGDEIRFGASAAFAFRLEALPEAPSGLEAAVQQLQLHADSSSSNGNGSGSSSSSGLPQVSEEEVAAAAADMASLSNMSRRDPPRAEALLRRLLAARPGDAALWLIWAQMAARVEGPGPGQAKARMLFRAAADAARRMPVLPPPPLALQMAARRATGAGRRRRRGASTTASMDGDDGALSVADGSSSADAAIDPASGASPSAAAGPPAPSARPRHNWLLVQALGNWGKHEWRLRMYGSARHLFRAAADEAARHSGGLAAGGGGAVMHYWGSRELEAGNVRNARIVAAEALRKCPADVALYVLAASVELEASNLELAKGYCQRAYALDRTDKQLFLIWPRVEAGLGDRDKARLLFERALDAHPLNTKIINMYARFEAEEGSYREAAELYDRALQIDPLSPGPGVHNRADWASMETDLGNTGLARQLLEEGLEAHPNSAALLVVYSKLQRLEGRYQEALAAVRRAQAVAGAFNAAVMNERAQVLRALGERELAANLSRHVSAVKQLNRMKQQGYWGSEAWRAFVEATRTPEQRTLVAAARAHRLQLGWAPAVRGAKPGPPPGVVAGDGRRPAAPETQQWMALEELRRQRAEARRLTAQRTARLRAEEAAAAAGGGEAGAAAAAAALAMGSTGSMGSMDGDEGYDDEIQDPVMYGADLGSGPLPRRRLEDQDADYYEEPESMALPPLDAVRRPMPDADDM</sequence>